<sequence>MSACNTFTEHVWKPGECKNCFKPKSLHQLPPDSEKTPITHGSGKTNANHSNNHRVRSTGNFRPPVAKKPTIAVKPTMMVADGQSVCGELSIQEHCENKPVILGWNQNKTSLSQKPLNNNSEGDAEGFGSDPQQCANNDSAQKISNNNNGLTEVLKEIAGLEATPPVRGNETNARETFLGRINDCYKRSLERKIPPSCMTGSMKDSQGKHVILSGSAEVISNEGGRFCYPEFSSGEESEEDVLFSNMEEEHESWDESDEELLAMEIRMRGQPRFANFRANTLSPVRFFVSKKWNTIPLRNKSLQRICAVDYDDSYDEILNGYEENSGVSYGQGSVQSTISSDCTSPGSSFTEESRSETASSLSQKVCNGGISPGNPGNSKDIAETESNFESPPGNNEEKDESLTSKSSVKVPETHKAVLALRLQEKDGKIAVHTEKPESKASTDIAGQAVTISLVPVEEQTKPYRVVNLEQPLCKPYTVVDVSAAMASEHLGRPKIKGSSSTPNSPVTSPALTPGQINAHLKKSSAIRYQEVWTSSTSPRQKIPKIELSTGGPGPNVPPRKNCHKSAPTSPTATNISSKTIPVKSPNLSEIKFNSYNNAGMPPFPIIIHDEPSYARSSKNAIKVPIVINPNAYDNLAIYKSFLGTSGELSVKEKTTSVISHTYEEIETESKVSDSTPSKLTDCPQAKGFSNSTERKRGSVAQKVQEFNNCLNRGQSSPQRSYSSTHSSPAKIQRPTQEPAGKTEGAQGSQVPGSSSNSTREKASAVLCQIVASIQPPQTPPEAPQSSPKACSVEELYAVPPDADTTKSIPKNPPVRPKSLFTSQSSGEGEAHQTTESPTAKIQKDPSTKPVTSPPSKLVTSAQSEPPPPFPPPRSTSSPYHASNLLQRHFTNWTKPTSPTRSTEAESILHSEGSRRAADAKPKRWISFKSFFRRRKTDEEEEKEKEREKGKLVGLDGTVIHMLPPPPVQRHHWFTEAKGEASEKPAIVFMYRCDPDQGHLSVDQSKAGAEKGRAEEVLLRNSEEKKSSYLPSQIPDKACSRVTHEVAGELSPRDPRTPAGKQDGTSVTPTLPPPDLEREEEKDDTLDPTDVSPCSATYSNLGQSRAAMIPPKHPRHPKGAVDDAIAFGEKTDQEGLNASQPTPPPLPKKMIRANTEPISKDLQKAMESSLCVMANPTYDIDPNWDASSAGSSISYELKGLDVESYESLERPLHKERPVPSAANSISSLATLSVKDRFSNSMESLSSRRGLSYRQTRSIQKPQRQALYRGLDNREEVVGKLRSLHTDALKRLAVKCEDLFMAGQKDQLRFGVDSWSDFRLTSDKPCCEAGDAVYYTASYAKDPLSNYAVKICKSKAKESQQYYHSLAVRQSLPVHFNIQQDCGHFLAEVPSRLLPWEDPDAPEKAEDGTEDSEEEGKAETLGGNPEPCSETEPSQKENQRVTNRKQRSHVVVITREVPHLTVADFVRDSLAHHGNSPDLYERQVCLLLLQLCSGLEHLKPYHVTHCDLRLENLLLVQHQPGGAAQGPSPADPCPTLACPTRLIVSNFSQAKQKSHLVDPQILRDQSRLAPEIITATQYKKCDEFQTGILIYEMLHLPNPFDENPELKEKEYTRTDLPRIPLRSPYSWGLQQLASCLLNPNPSERILISDAKGILQCLLWGPREDLFQIFTTSATLAQKNALLQNWLDIKRTLLMIKFAEKSLDREGGISLEDWLCAQYLAFATTDSLSYIVKILQYR</sequence>
<organism>
    <name type="scientific">Mus musculus</name>
    <name type="common">Mouse</name>
    <dbReference type="NCBI Taxonomy" id="10090"/>
    <lineage>
        <taxon>Eukaryota</taxon>
        <taxon>Metazoa</taxon>
        <taxon>Chordata</taxon>
        <taxon>Craniata</taxon>
        <taxon>Vertebrata</taxon>
        <taxon>Euteleostomi</taxon>
        <taxon>Mammalia</taxon>
        <taxon>Eutheria</taxon>
        <taxon>Euarchontoglires</taxon>
        <taxon>Glires</taxon>
        <taxon>Rodentia</taxon>
        <taxon>Myomorpha</taxon>
        <taxon>Muroidea</taxon>
        <taxon>Muridae</taxon>
        <taxon>Murinae</taxon>
        <taxon>Mus</taxon>
        <taxon>Mus</taxon>
    </lineage>
</organism>
<comment type="function">
    <text evidence="1">Probable catalytically inactive kinase. Scaffolding protein that regulates the cytoskeleton to control cell spreading and migration by modulating focal adhesion dynamics. Acts as a scaffold for mediating EGFR signaling.</text>
</comment>
<comment type="subunit">
    <text evidence="1 5">Homodimer (By similarity). Interacts with BCAR1 and CRK (By similarity). Interacts with PRAG1 (By similarity). Interacts (when phosphorylated at Tyr-1177) with SHC1 (via PID domain) (By similarity). Found in a complex with PPP1CA, PPP1CC and SHC1 (By similarity). Interacts (when phosphorylated at Tyr-632) with tensin TNS3 (when phosphorylated on the SH2 domain); TNS3 also interacts with integrins ITGB1, ITGB3 and ITGB5 and mediates their association with PEAK1 (PubMed:35687021).</text>
</comment>
<comment type="subcellular location">
    <subcellularLocation>
        <location evidence="4">Cytoplasm</location>
        <location evidence="4">Cytoskeleton</location>
    </subcellularLocation>
    <subcellularLocation>
        <location evidence="4 5">Cell junction</location>
        <location evidence="4 5">Focal adhesion</location>
    </subcellularLocation>
    <text>Colocalizes with actin (PubMed:20534451).</text>
</comment>
<comment type="domain">
    <text evidence="1">The dimerization region encompasses helices both from the N- and C-terminal of the protein kinase domain.</text>
</comment>
<comment type="PTM">
    <text evidence="1 4">Phosphorylated on tyrosine in a CSK-dependent manner in response to adhesion to fibronectin and to EGF stimulation (PubMed:20534451). Phosphorylation at Tyr-662 by a Src family kinase controls subcellular localization to focal adhesion and focal adhesion dynamics. Phosphorylation at Tyr-1177 is essential for binding to SHC1. Phosphorylation at Tyr-632 promotes interaction with tensin TNS3.</text>
</comment>
<comment type="similarity">
    <text evidence="7">Belongs to the protein kinase superfamily.</text>
</comment>
<comment type="caution">
    <text evidence="1">Has been the subject of controversy surrounding its catalytic capabilities. Early characterization of PEAK1 gave a weak in vitro tyrosine kinase activity. The crystal structure indicates that the kinase-domain contains a closed nucleotide-binding cleft that in this conformation may deleteriously affect nucleotide binding. Furthermore PEAK1 is devoid of nucleotide binding activity, as detected by a thermal-shift assay. So it seems probable that PEAK1 is an inactive kinase.</text>
</comment>
<reference key="1">
    <citation type="journal article" date="2009" name="PLoS Biol.">
        <title>Lineage-specific biology revealed by a finished genome assembly of the mouse.</title>
        <authorList>
            <person name="Church D.M."/>
            <person name="Goodstadt L."/>
            <person name="Hillier L.W."/>
            <person name="Zody M.C."/>
            <person name="Goldstein S."/>
            <person name="She X."/>
            <person name="Bult C.J."/>
            <person name="Agarwala R."/>
            <person name="Cherry J.L."/>
            <person name="DiCuccio M."/>
            <person name="Hlavina W."/>
            <person name="Kapustin Y."/>
            <person name="Meric P."/>
            <person name="Maglott D."/>
            <person name="Birtle Z."/>
            <person name="Marques A.C."/>
            <person name="Graves T."/>
            <person name="Zhou S."/>
            <person name="Teague B."/>
            <person name="Potamousis K."/>
            <person name="Churas C."/>
            <person name="Place M."/>
            <person name="Herschleb J."/>
            <person name="Runnheim R."/>
            <person name="Forrest D."/>
            <person name="Amos-Landgraf J."/>
            <person name="Schwartz D.C."/>
            <person name="Cheng Z."/>
            <person name="Lindblad-Toh K."/>
            <person name="Eichler E.E."/>
            <person name="Ponting C.P."/>
        </authorList>
    </citation>
    <scope>NUCLEOTIDE SEQUENCE [LARGE SCALE GENOMIC DNA]</scope>
    <source>
        <strain>C57BL/6J</strain>
    </source>
</reference>
<reference key="2">
    <citation type="journal article" date="2005" name="Science">
        <title>The transcriptional landscape of the mammalian genome.</title>
        <authorList>
            <person name="Carninci P."/>
            <person name="Kasukawa T."/>
            <person name="Katayama S."/>
            <person name="Gough J."/>
            <person name="Frith M.C."/>
            <person name="Maeda N."/>
            <person name="Oyama R."/>
            <person name="Ravasi T."/>
            <person name="Lenhard B."/>
            <person name="Wells C."/>
            <person name="Kodzius R."/>
            <person name="Shimokawa K."/>
            <person name="Bajic V.B."/>
            <person name="Brenner S.E."/>
            <person name="Batalov S."/>
            <person name="Forrest A.R."/>
            <person name="Zavolan M."/>
            <person name="Davis M.J."/>
            <person name="Wilming L.G."/>
            <person name="Aidinis V."/>
            <person name="Allen J.E."/>
            <person name="Ambesi-Impiombato A."/>
            <person name="Apweiler R."/>
            <person name="Aturaliya R.N."/>
            <person name="Bailey T.L."/>
            <person name="Bansal M."/>
            <person name="Baxter L."/>
            <person name="Beisel K.W."/>
            <person name="Bersano T."/>
            <person name="Bono H."/>
            <person name="Chalk A.M."/>
            <person name="Chiu K.P."/>
            <person name="Choudhary V."/>
            <person name="Christoffels A."/>
            <person name="Clutterbuck D.R."/>
            <person name="Crowe M.L."/>
            <person name="Dalla E."/>
            <person name="Dalrymple B.P."/>
            <person name="de Bono B."/>
            <person name="Della Gatta G."/>
            <person name="di Bernardo D."/>
            <person name="Down T."/>
            <person name="Engstrom P."/>
            <person name="Fagiolini M."/>
            <person name="Faulkner G."/>
            <person name="Fletcher C.F."/>
            <person name="Fukushima T."/>
            <person name="Furuno M."/>
            <person name="Futaki S."/>
            <person name="Gariboldi M."/>
            <person name="Georgii-Hemming P."/>
            <person name="Gingeras T.R."/>
            <person name="Gojobori T."/>
            <person name="Green R.E."/>
            <person name="Gustincich S."/>
            <person name="Harbers M."/>
            <person name="Hayashi Y."/>
            <person name="Hensch T.K."/>
            <person name="Hirokawa N."/>
            <person name="Hill D."/>
            <person name="Huminiecki L."/>
            <person name="Iacono M."/>
            <person name="Ikeo K."/>
            <person name="Iwama A."/>
            <person name="Ishikawa T."/>
            <person name="Jakt M."/>
            <person name="Kanapin A."/>
            <person name="Katoh M."/>
            <person name="Kawasawa Y."/>
            <person name="Kelso J."/>
            <person name="Kitamura H."/>
            <person name="Kitano H."/>
            <person name="Kollias G."/>
            <person name="Krishnan S.P."/>
            <person name="Kruger A."/>
            <person name="Kummerfeld S.K."/>
            <person name="Kurochkin I.V."/>
            <person name="Lareau L.F."/>
            <person name="Lazarevic D."/>
            <person name="Lipovich L."/>
            <person name="Liu J."/>
            <person name="Liuni S."/>
            <person name="McWilliam S."/>
            <person name="Madan Babu M."/>
            <person name="Madera M."/>
            <person name="Marchionni L."/>
            <person name="Matsuda H."/>
            <person name="Matsuzawa S."/>
            <person name="Miki H."/>
            <person name="Mignone F."/>
            <person name="Miyake S."/>
            <person name="Morris K."/>
            <person name="Mottagui-Tabar S."/>
            <person name="Mulder N."/>
            <person name="Nakano N."/>
            <person name="Nakauchi H."/>
            <person name="Ng P."/>
            <person name="Nilsson R."/>
            <person name="Nishiguchi S."/>
            <person name="Nishikawa S."/>
            <person name="Nori F."/>
            <person name="Ohara O."/>
            <person name="Okazaki Y."/>
            <person name="Orlando V."/>
            <person name="Pang K.C."/>
            <person name="Pavan W.J."/>
            <person name="Pavesi G."/>
            <person name="Pesole G."/>
            <person name="Petrovsky N."/>
            <person name="Piazza S."/>
            <person name="Reed J."/>
            <person name="Reid J.F."/>
            <person name="Ring B.Z."/>
            <person name="Ringwald M."/>
            <person name="Rost B."/>
            <person name="Ruan Y."/>
            <person name="Salzberg S.L."/>
            <person name="Sandelin A."/>
            <person name="Schneider C."/>
            <person name="Schoenbach C."/>
            <person name="Sekiguchi K."/>
            <person name="Semple C.A."/>
            <person name="Seno S."/>
            <person name="Sessa L."/>
            <person name="Sheng Y."/>
            <person name="Shibata Y."/>
            <person name="Shimada H."/>
            <person name="Shimada K."/>
            <person name="Silva D."/>
            <person name="Sinclair B."/>
            <person name="Sperling S."/>
            <person name="Stupka E."/>
            <person name="Sugiura K."/>
            <person name="Sultana R."/>
            <person name="Takenaka Y."/>
            <person name="Taki K."/>
            <person name="Tammoja K."/>
            <person name="Tan S.L."/>
            <person name="Tang S."/>
            <person name="Taylor M.S."/>
            <person name="Tegner J."/>
            <person name="Teichmann S.A."/>
            <person name="Ueda H.R."/>
            <person name="van Nimwegen E."/>
            <person name="Verardo R."/>
            <person name="Wei C.L."/>
            <person name="Yagi K."/>
            <person name="Yamanishi H."/>
            <person name="Zabarovsky E."/>
            <person name="Zhu S."/>
            <person name="Zimmer A."/>
            <person name="Hide W."/>
            <person name="Bult C."/>
            <person name="Grimmond S.M."/>
            <person name="Teasdale R.D."/>
            <person name="Liu E.T."/>
            <person name="Brusic V."/>
            <person name="Quackenbush J."/>
            <person name="Wahlestedt C."/>
            <person name="Mattick J.S."/>
            <person name="Hume D.A."/>
            <person name="Kai C."/>
            <person name="Sasaki D."/>
            <person name="Tomaru Y."/>
            <person name="Fukuda S."/>
            <person name="Kanamori-Katayama M."/>
            <person name="Suzuki M."/>
            <person name="Aoki J."/>
            <person name="Arakawa T."/>
            <person name="Iida J."/>
            <person name="Imamura K."/>
            <person name="Itoh M."/>
            <person name="Kato T."/>
            <person name="Kawaji H."/>
            <person name="Kawagashira N."/>
            <person name="Kawashima T."/>
            <person name="Kojima M."/>
            <person name="Kondo S."/>
            <person name="Konno H."/>
            <person name="Nakano K."/>
            <person name="Ninomiya N."/>
            <person name="Nishio T."/>
            <person name="Okada M."/>
            <person name="Plessy C."/>
            <person name="Shibata K."/>
            <person name="Shiraki T."/>
            <person name="Suzuki S."/>
            <person name="Tagami M."/>
            <person name="Waki K."/>
            <person name="Watahiki A."/>
            <person name="Okamura-Oho Y."/>
            <person name="Suzuki H."/>
            <person name="Kawai J."/>
            <person name="Hayashizaki Y."/>
        </authorList>
    </citation>
    <scope>NUCLEOTIDE SEQUENCE [LARGE SCALE MRNA] OF 1-991</scope>
    <source>
        <strain>C57BL/6J</strain>
        <tissue>Cerebellum</tissue>
    </source>
</reference>
<reference key="3">
    <citation type="journal article" date="2004" name="DNA Res.">
        <title>Prediction of the coding sequences of mouse homologues of KIAA gene: IV. The complete nucleotide sequences of 500 mouse KIAA-homologous cDNAs identified by screening of terminal sequences of cDNA clones randomly sampled from size-fractionated libraries.</title>
        <authorList>
            <person name="Okazaki N."/>
            <person name="Kikuno R."/>
            <person name="Ohara R."/>
            <person name="Inamoto S."/>
            <person name="Koseki H."/>
            <person name="Hiraoka S."/>
            <person name="Saga Y."/>
            <person name="Seino S."/>
            <person name="Nishimura M."/>
            <person name="Kaisho T."/>
            <person name="Hoshino K."/>
            <person name="Kitamura H."/>
            <person name="Nagase T."/>
            <person name="Ohara O."/>
            <person name="Koga H."/>
        </authorList>
    </citation>
    <scope>NUCLEOTIDE SEQUENCE [LARGE SCALE MRNA] OF 1026-1735</scope>
    <source>
        <tissue>Embryonic intestine</tissue>
    </source>
</reference>
<reference key="4">
    <citation type="journal article" date="2004" name="Genome Res.">
        <title>The status, quality, and expansion of the NIH full-length cDNA project: the Mammalian Gene Collection (MGC).</title>
        <authorList>
            <consortium name="The MGC Project Team"/>
        </authorList>
    </citation>
    <scope>NUCLEOTIDE SEQUENCE [LARGE SCALE MRNA] OF 1534-1735</scope>
    <source>
        <strain>FVB/N</strain>
        <tissue>Mammary tumor</tissue>
    </source>
</reference>
<reference key="5">
    <citation type="journal article" date="2005" name="Nat. Biotechnol.">
        <title>Immunoaffinity profiling of tyrosine phosphorylation in cancer cells.</title>
        <authorList>
            <person name="Rush J."/>
            <person name="Moritz A."/>
            <person name="Lee K.A."/>
            <person name="Guo A."/>
            <person name="Goss V.L."/>
            <person name="Spek E.J."/>
            <person name="Zhang H."/>
            <person name="Zha X.-M."/>
            <person name="Polakiewicz R.D."/>
            <person name="Comb M.J."/>
        </authorList>
    </citation>
    <scope>PHOSPHORYLATION [LARGE SCALE ANALYSIS] AT TYR-632 AND TYR-638</scope>
    <scope>IDENTIFICATION BY MASS SPECTROMETRY [LARGE SCALE ANALYSIS]</scope>
</reference>
<reference key="6">
    <citation type="journal article" date="2008" name="J. Proteome Res.">
        <title>Large-scale identification and evolution indexing of tyrosine phosphorylation sites from murine brain.</title>
        <authorList>
            <person name="Ballif B.A."/>
            <person name="Carey G.R."/>
            <person name="Sunyaev S.R."/>
            <person name="Gygi S.P."/>
        </authorList>
    </citation>
    <scope>PHOSPHORYLATION [LARGE SCALE ANALYSIS] AT TYR-632</scope>
    <scope>IDENTIFICATION BY MASS SPECTROMETRY [LARGE SCALE ANALYSIS]</scope>
    <source>
        <tissue>Brain</tissue>
    </source>
</reference>
<reference key="7">
    <citation type="journal article" date="2009" name="Immunity">
        <title>The phagosomal proteome in interferon-gamma-activated macrophages.</title>
        <authorList>
            <person name="Trost M."/>
            <person name="English L."/>
            <person name="Lemieux S."/>
            <person name="Courcelles M."/>
            <person name="Desjardins M."/>
            <person name="Thibault P."/>
        </authorList>
    </citation>
    <scope>PHOSPHORYLATION [LARGE SCALE ANALYSIS] AT SER-282</scope>
    <scope>IDENTIFICATION BY MASS SPECTROMETRY [LARGE SCALE ANALYSIS]</scope>
</reference>
<reference key="8">
    <citation type="journal article" date="2010" name="Cell">
        <title>A tissue-specific atlas of mouse protein phosphorylation and expression.</title>
        <authorList>
            <person name="Huttlin E.L."/>
            <person name="Jedrychowski M.P."/>
            <person name="Elias J.E."/>
            <person name="Goswami T."/>
            <person name="Rad R."/>
            <person name="Beausoleil S.A."/>
            <person name="Villen J."/>
            <person name="Haas W."/>
            <person name="Sowa M.E."/>
            <person name="Gygi S.P."/>
        </authorList>
    </citation>
    <scope>PHOSPHORYLATION [LARGE SCALE ANALYSIS] AT SER-824; SER-825 AND THR-1141</scope>
    <scope>IDENTIFICATION BY MASS SPECTROMETRY [LARGE SCALE ANALYSIS]</scope>
    <source>
        <tissue>Brain</tissue>
        <tissue>Kidney</tissue>
        <tissue>Lung</tissue>
        <tissue>Pancreas</tissue>
        <tissue>Spleen</tissue>
    </source>
</reference>
<reference key="9">
    <citation type="journal article" date="2010" name="Proc. Natl. Acad. Sci. U.S.A.">
        <title>Pseudopodium-enriched atypical kinase 1 regulates the cytoskeleton and cancer progression.</title>
        <authorList>
            <person name="Wang Y."/>
            <person name="Kelber J.A."/>
            <person name="Tran Cao H.S."/>
            <person name="Cantin G.T."/>
            <person name="Lin R."/>
            <person name="Wang W."/>
            <person name="Kaushal S."/>
            <person name="Bristow J.M."/>
            <person name="Edgington T.S."/>
            <person name="Hoffman R.M."/>
            <person name="Bouvet M."/>
            <person name="Yates J.R. III"/>
            <person name="Klemke R.L."/>
        </authorList>
    </citation>
    <scope>SUBCELLULAR LOCATION</scope>
    <scope>PHOSPHORYLATION BY CSK</scope>
</reference>
<reference key="10">
    <citation type="journal article" date="2010" name="Proc. Natl. Acad. Sci. U.S.A.">
        <authorList>
            <person name="Wang Y."/>
            <person name="Kelber J.A."/>
            <person name="Tran Cao H.S."/>
            <person name="Cantin G.T."/>
            <person name="Lin R."/>
            <person name="Wang W."/>
            <person name="Kaushal S."/>
            <person name="Bristow J.M."/>
            <person name="Edgington T.S."/>
            <person name="Hoffman R.M."/>
            <person name="Bouvet M."/>
            <person name="Yates J.R. III"/>
            <person name="Klemke R.L."/>
        </authorList>
    </citation>
    <scope>ERRATUM OF PUBMED:20534451</scope>
</reference>
<reference key="11">
    <citation type="journal article" date="2022" name="J. Cell Biol.">
        <title>PEAK1 Y635 phosphorylation regulates cell migration through association with Tensin3 and integrins.</title>
        <authorList>
            <person name="Zuidema A."/>
            <person name="Atherton P."/>
            <person name="Kreft M."/>
            <person name="Hoekman L."/>
            <person name="Bleijerveld O.B."/>
            <person name="Nagaraj N."/>
            <person name="Chen N."/>
            <person name="Faessler R."/>
            <person name="Sonnenberg A."/>
        </authorList>
    </citation>
    <scope>INTERACTION WITH TNS3</scope>
    <scope>SUBCELLULAR LOCATION</scope>
</reference>
<name>PEAK1_MOUSE</name>
<dbReference type="EMBL" id="AC157474">
    <property type="status" value="NOT_ANNOTATED_CDS"/>
    <property type="molecule type" value="Genomic_DNA"/>
</dbReference>
<dbReference type="EMBL" id="AC159819">
    <property type="status" value="NOT_ANNOTATED_CDS"/>
    <property type="molecule type" value="Genomic_DNA"/>
</dbReference>
<dbReference type="EMBL" id="AC160935">
    <property type="status" value="NOT_ANNOTATED_CDS"/>
    <property type="molecule type" value="Genomic_DNA"/>
</dbReference>
<dbReference type="EMBL" id="AK048912">
    <property type="protein sequence ID" value="BAC33490.1"/>
    <property type="molecule type" value="mRNA"/>
</dbReference>
<dbReference type="EMBL" id="AK173328">
    <property type="protein sequence ID" value="BAD32606.1"/>
    <property type="molecule type" value="mRNA"/>
</dbReference>
<dbReference type="EMBL" id="BC026466">
    <property type="protein sequence ID" value="AAH26466.1"/>
    <property type="molecule type" value="mRNA"/>
</dbReference>
<dbReference type="CCDS" id="CCDS52804.1"/>
<dbReference type="RefSeq" id="NP_766512.2">
    <property type="nucleotide sequence ID" value="NM_172924.3"/>
</dbReference>
<dbReference type="RefSeq" id="XP_006511230.1">
    <property type="nucleotide sequence ID" value="XM_006511167.5"/>
</dbReference>
<dbReference type="RefSeq" id="XP_006511231.1">
    <property type="nucleotide sequence ID" value="XM_006511168.5"/>
</dbReference>
<dbReference type="RefSeq" id="XP_036010901.1">
    <property type="nucleotide sequence ID" value="XM_036155008.1"/>
</dbReference>
<dbReference type="SMR" id="Q69Z38"/>
<dbReference type="BioGRID" id="232703">
    <property type="interactions" value="10"/>
</dbReference>
<dbReference type="FunCoup" id="Q69Z38">
    <property type="interactions" value="1025"/>
</dbReference>
<dbReference type="IntAct" id="Q69Z38">
    <property type="interactions" value="3"/>
</dbReference>
<dbReference type="STRING" id="10090.ENSMUSP00000109901"/>
<dbReference type="GlyGen" id="Q69Z38">
    <property type="glycosylation" value="7 sites, 4 N-linked glycans (4 sites), 1 O-linked glycan (1 site)"/>
</dbReference>
<dbReference type="iPTMnet" id="Q69Z38"/>
<dbReference type="PhosphoSitePlus" id="Q69Z38"/>
<dbReference type="SwissPalm" id="Q69Z38"/>
<dbReference type="jPOST" id="Q69Z38"/>
<dbReference type="PaxDb" id="10090-ENSMUSP00000109901"/>
<dbReference type="PeptideAtlas" id="Q69Z38"/>
<dbReference type="ProteomicsDB" id="287911"/>
<dbReference type="Pumba" id="Q69Z38"/>
<dbReference type="Antibodypedia" id="7598">
    <property type="antibodies" value="210 antibodies from 29 providers"/>
</dbReference>
<dbReference type="DNASU" id="244895"/>
<dbReference type="Ensembl" id="ENSMUST00000061552.15">
    <property type="protein sequence ID" value="ENSMUSP00000109901.3"/>
    <property type="gene ID" value="ENSMUSG00000074305.10"/>
</dbReference>
<dbReference type="GeneID" id="244895"/>
<dbReference type="KEGG" id="mmu:244895"/>
<dbReference type="UCSC" id="uc009psz.2">
    <property type="organism name" value="mouse"/>
</dbReference>
<dbReference type="AGR" id="MGI:2442366"/>
<dbReference type="CTD" id="79834"/>
<dbReference type="MGI" id="MGI:2442366">
    <property type="gene designation" value="Peak1"/>
</dbReference>
<dbReference type="VEuPathDB" id="HostDB:ENSMUSG00000074305"/>
<dbReference type="eggNOG" id="ENOG502QVUZ">
    <property type="taxonomic scope" value="Eukaryota"/>
</dbReference>
<dbReference type="GeneTree" id="ENSGT00940000157591"/>
<dbReference type="HOGENOM" id="CLU_002882_0_0_1"/>
<dbReference type="InParanoid" id="Q69Z38"/>
<dbReference type="OMA" id="MGWNRNR"/>
<dbReference type="OrthoDB" id="9888661at2759"/>
<dbReference type="TreeFam" id="TF333340"/>
<dbReference type="Reactome" id="R-MMU-9013420">
    <property type="pathway name" value="RHOU GTPase cycle"/>
</dbReference>
<dbReference type="Reactome" id="R-MMU-9013424">
    <property type="pathway name" value="RHOV GTPase cycle"/>
</dbReference>
<dbReference type="BioGRID-ORCS" id="244895">
    <property type="hits" value="5 hits in 80 CRISPR screens"/>
</dbReference>
<dbReference type="CD-CODE" id="CE726F99">
    <property type="entry name" value="Postsynaptic density"/>
</dbReference>
<dbReference type="ChiTaRS" id="Peak1">
    <property type="organism name" value="mouse"/>
</dbReference>
<dbReference type="PRO" id="PR:Q69Z38"/>
<dbReference type="Proteomes" id="UP000000589">
    <property type="component" value="Chromosome 9"/>
</dbReference>
<dbReference type="RNAct" id="Q69Z38">
    <property type="molecule type" value="protein"/>
</dbReference>
<dbReference type="Bgee" id="ENSMUSG00000074305">
    <property type="expression patterns" value="Expressed in animal zygote and 217 other cell types or tissues"/>
</dbReference>
<dbReference type="ExpressionAtlas" id="Q69Z38">
    <property type="expression patterns" value="baseline and differential"/>
</dbReference>
<dbReference type="GO" id="GO:0015629">
    <property type="term" value="C:actin cytoskeleton"/>
    <property type="evidence" value="ECO:0000314"/>
    <property type="project" value="UniProtKB"/>
</dbReference>
<dbReference type="GO" id="GO:0005829">
    <property type="term" value="C:cytosol"/>
    <property type="evidence" value="ECO:0007669"/>
    <property type="project" value="Ensembl"/>
</dbReference>
<dbReference type="GO" id="GO:0005925">
    <property type="term" value="C:focal adhesion"/>
    <property type="evidence" value="ECO:0000314"/>
    <property type="project" value="UniProtKB"/>
</dbReference>
<dbReference type="GO" id="GO:0042802">
    <property type="term" value="F:identical protein binding"/>
    <property type="evidence" value="ECO:0007669"/>
    <property type="project" value="Ensembl"/>
</dbReference>
<dbReference type="GO" id="GO:0004715">
    <property type="term" value="F:non-membrane spanning protein tyrosine kinase activity"/>
    <property type="evidence" value="ECO:0000250"/>
    <property type="project" value="UniProtKB"/>
</dbReference>
<dbReference type="GO" id="GO:0016477">
    <property type="term" value="P:cell migration"/>
    <property type="evidence" value="ECO:0000250"/>
    <property type="project" value="UniProtKB"/>
</dbReference>
<dbReference type="GO" id="GO:0048041">
    <property type="term" value="P:focal adhesion assembly"/>
    <property type="evidence" value="ECO:0000250"/>
    <property type="project" value="UniProtKB"/>
</dbReference>
<dbReference type="GO" id="GO:0051893">
    <property type="term" value="P:regulation of focal adhesion assembly"/>
    <property type="evidence" value="ECO:0000250"/>
    <property type="project" value="UniProtKB"/>
</dbReference>
<dbReference type="GO" id="GO:0034446">
    <property type="term" value="P:substrate adhesion-dependent cell spreading"/>
    <property type="evidence" value="ECO:0000250"/>
    <property type="project" value="UniProtKB"/>
</dbReference>
<dbReference type="FunFam" id="1.10.510.10:FF:000437">
    <property type="entry name" value="Pseudopodium enriched atypical kinase 1"/>
    <property type="match status" value="1"/>
</dbReference>
<dbReference type="Gene3D" id="1.10.510.10">
    <property type="entry name" value="Transferase(Phosphotransferase) domain 1"/>
    <property type="match status" value="1"/>
</dbReference>
<dbReference type="InterPro" id="IPR011009">
    <property type="entry name" value="Kinase-like_dom_sf"/>
</dbReference>
<dbReference type="InterPro" id="IPR051511">
    <property type="entry name" value="MitoQC_Scaffold_Kinases"/>
</dbReference>
<dbReference type="InterPro" id="IPR000719">
    <property type="entry name" value="Prot_kinase_dom"/>
</dbReference>
<dbReference type="InterPro" id="IPR008266">
    <property type="entry name" value="Tyr_kinase_AS"/>
</dbReference>
<dbReference type="PANTHER" id="PTHR22972:SF5">
    <property type="entry name" value="INACTIVE TYROSINE-PROTEIN KINASE PEAK1"/>
    <property type="match status" value="1"/>
</dbReference>
<dbReference type="PANTHER" id="PTHR22972">
    <property type="entry name" value="SERINE/THREONINE PROTEIN KINASE"/>
    <property type="match status" value="1"/>
</dbReference>
<dbReference type="Pfam" id="PF00069">
    <property type="entry name" value="Pkinase"/>
    <property type="match status" value="1"/>
</dbReference>
<dbReference type="SMART" id="SM00220">
    <property type="entry name" value="S_TKc"/>
    <property type="match status" value="1"/>
</dbReference>
<dbReference type="SUPFAM" id="SSF56112">
    <property type="entry name" value="Protein kinase-like (PK-like)"/>
    <property type="match status" value="1"/>
</dbReference>
<dbReference type="PROSITE" id="PS50011">
    <property type="entry name" value="PROTEIN_KINASE_DOM"/>
    <property type="match status" value="1"/>
</dbReference>
<dbReference type="PROSITE" id="PS00109">
    <property type="entry name" value="PROTEIN_KINASE_TYR"/>
    <property type="match status" value="1"/>
</dbReference>
<feature type="chain" id="PRO_0000250590" description="Inactive tyrosine-protein kinase PEAK1">
    <location>
        <begin position="1"/>
        <end position="1735"/>
    </location>
</feature>
<feature type="domain" description="Protein kinase" evidence="2">
    <location>
        <begin position="1302"/>
        <end position="1664"/>
    </location>
</feature>
<feature type="region of interest" description="Disordered" evidence="3">
    <location>
        <begin position="26"/>
        <end position="66"/>
    </location>
</feature>
<feature type="region of interest" description="Disordered" evidence="3">
    <location>
        <begin position="111"/>
        <end position="145"/>
    </location>
</feature>
<feature type="region of interest" description="Disordered" evidence="3">
    <location>
        <begin position="324"/>
        <end position="410"/>
    </location>
</feature>
<feature type="region of interest" description="Disordered" evidence="3">
    <location>
        <begin position="491"/>
        <end position="514"/>
    </location>
</feature>
<feature type="region of interest" description="Disordered" evidence="3">
    <location>
        <begin position="537"/>
        <end position="580"/>
    </location>
</feature>
<feature type="region of interest" description="Disordered" evidence="3">
    <location>
        <begin position="663"/>
        <end position="762"/>
    </location>
</feature>
<feature type="region of interest" description="Disordered" evidence="3">
    <location>
        <begin position="800"/>
        <end position="919"/>
    </location>
</feature>
<feature type="region of interest" description="Disordered" evidence="3">
    <location>
        <begin position="1019"/>
        <end position="1097"/>
    </location>
</feature>
<feature type="region of interest" description="Required for homodimerization" evidence="1">
    <location>
        <begin position="1274"/>
        <end position="1300"/>
    </location>
</feature>
<feature type="region of interest" description="Disordered" evidence="3">
    <location>
        <begin position="1394"/>
        <end position="1445"/>
    </location>
</feature>
<feature type="region of interest" description="Required for homodimerization" evidence="1">
    <location>
        <begin position="1659"/>
        <end position="1732"/>
    </location>
</feature>
<feature type="compositionally biased region" description="Polar residues" evidence="3">
    <location>
        <begin position="111"/>
        <end position="121"/>
    </location>
</feature>
<feature type="compositionally biased region" description="Polar residues" evidence="3">
    <location>
        <begin position="130"/>
        <end position="145"/>
    </location>
</feature>
<feature type="compositionally biased region" description="Low complexity" evidence="3">
    <location>
        <begin position="325"/>
        <end position="336"/>
    </location>
</feature>
<feature type="compositionally biased region" description="Polar residues" evidence="3">
    <location>
        <begin position="337"/>
        <end position="365"/>
    </location>
</feature>
<feature type="compositionally biased region" description="Low complexity" evidence="3">
    <location>
        <begin position="367"/>
        <end position="378"/>
    </location>
</feature>
<feature type="compositionally biased region" description="Polar residues" evidence="3">
    <location>
        <begin position="384"/>
        <end position="393"/>
    </location>
</feature>
<feature type="compositionally biased region" description="Low complexity" evidence="3">
    <location>
        <begin position="498"/>
        <end position="509"/>
    </location>
</feature>
<feature type="compositionally biased region" description="Polar residues" evidence="3">
    <location>
        <begin position="566"/>
        <end position="580"/>
    </location>
</feature>
<feature type="compositionally biased region" description="Polar residues" evidence="3">
    <location>
        <begin position="704"/>
        <end position="735"/>
    </location>
</feature>
<feature type="compositionally biased region" description="Polar residues" evidence="3">
    <location>
        <begin position="745"/>
        <end position="757"/>
    </location>
</feature>
<feature type="compositionally biased region" description="Polar residues" evidence="3">
    <location>
        <begin position="819"/>
        <end position="839"/>
    </location>
</feature>
<feature type="compositionally biased region" description="Low complexity" evidence="3">
    <location>
        <begin position="847"/>
        <end position="863"/>
    </location>
</feature>
<feature type="compositionally biased region" description="Pro residues" evidence="3">
    <location>
        <begin position="864"/>
        <end position="873"/>
    </location>
</feature>
<feature type="compositionally biased region" description="Polar residues" evidence="3">
    <location>
        <begin position="879"/>
        <end position="901"/>
    </location>
</feature>
<feature type="compositionally biased region" description="Basic and acidic residues" evidence="3">
    <location>
        <begin position="902"/>
        <end position="919"/>
    </location>
</feature>
<feature type="compositionally biased region" description="Basic and acidic residues" evidence="3">
    <location>
        <begin position="1037"/>
        <end position="1055"/>
    </location>
</feature>
<feature type="compositionally biased region" description="Acidic residues" evidence="3">
    <location>
        <begin position="1076"/>
        <end position="1086"/>
    </location>
</feature>
<feature type="modified residue" description="Phosphoserine" evidence="10">
    <location>
        <position position="282"/>
    </location>
</feature>
<feature type="modified residue" description="Phosphoserine" evidence="1">
    <location>
        <position position="537"/>
    </location>
</feature>
<feature type="modified residue" description="Phosphoserine" evidence="1">
    <location>
        <position position="569"/>
    </location>
</feature>
<feature type="modified residue" description="Phosphoserine" evidence="1">
    <location>
        <position position="584"/>
    </location>
</feature>
<feature type="modified residue" description="Phosphotyrosine" evidence="8 9">
    <location>
        <position position="632"/>
    </location>
</feature>
<feature type="modified residue" description="Phosphotyrosine" evidence="8">
    <location>
        <position position="638"/>
    </location>
</feature>
<feature type="modified residue" description="Phosphoserine" evidence="1">
    <location>
        <position position="645"/>
    </location>
</feature>
<feature type="modified residue" description="Phosphotyrosine" evidence="1">
    <location>
        <position position="662"/>
    </location>
</feature>
<feature type="modified residue" description="Phosphoserine" evidence="11">
    <location>
        <position position="824"/>
    </location>
</feature>
<feature type="modified residue" description="Phosphoserine" evidence="11">
    <location>
        <position position="825"/>
    </location>
</feature>
<feature type="modified residue" description="Phosphoserine" evidence="1">
    <location>
        <position position="897"/>
    </location>
</feature>
<feature type="modified residue" description="Phosphothreonine" evidence="11">
    <location>
        <position position="1141"/>
    </location>
</feature>
<feature type="modified residue" description="Phosphotyrosine" evidence="1">
    <location>
        <position position="1177"/>
    </location>
</feature>
<feature type="modified residue" description="Phosphoserine" evidence="1">
    <location>
        <position position="1363"/>
    </location>
</feature>
<feature type="sequence conflict" description="In Ref. 2; BAC33490." evidence="7" ref="2">
    <original>K</original>
    <variation>R</variation>
    <location>
        <position position="560"/>
    </location>
</feature>
<feature type="sequence conflict" description="In Ref. 2; BAC33490." evidence="7" ref="2">
    <original>PPVQRHHWFTEAKGEASEKPAIVFMYR</original>
    <variation>SSPAPSLVHRGQRRGQREACYSLHVQV</variation>
    <location>
        <begin position="965"/>
        <end position="991"/>
    </location>
</feature>
<feature type="sequence conflict" description="In Ref. 3; BAD32606." evidence="7" ref="3">
    <original>SSYLPSQIPDKACS</original>
    <variation>GDPVKMSLNGELCD</variation>
    <location>
        <begin position="1026"/>
        <end position="1039"/>
    </location>
</feature>
<feature type="sequence conflict" description="In Ref. 3; BAD32606." evidence="7" ref="3">
    <original>L</original>
    <variation>S</variation>
    <location>
        <position position="1085"/>
    </location>
</feature>
<feature type="sequence conflict" description="In Ref. 4; AAH26466." evidence="7" ref="4">
    <original>LAC</original>
    <variation>PTR</variation>
    <location>
        <begin position="1534"/>
        <end position="1536"/>
    </location>
</feature>
<proteinExistence type="evidence at protein level"/>
<accession>Q69Z38</accession>
<accession>E9QKY2</accession>
<accession>Q8BX56</accession>
<accession>Q8R365</accession>
<evidence type="ECO:0000250" key="1">
    <source>
        <dbReference type="UniProtKB" id="Q9H792"/>
    </source>
</evidence>
<evidence type="ECO:0000255" key="2">
    <source>
        <dbReference type="PROSITE-ProRule" id="PRU00159"/>
    </source>
</evidence>
<evidence type="ECO:0000256" key="3">
    <source>
        <dbReference type="SAM" id="MobiDB-lite"/>
    </source>
</evidence>
<evidence type="ECO:0000269" key="4">
    <source>
    </source>
</evidence>
<evidence type="ECO:0000269" key="5">
    <source>
    </source>
</evidence>
<evidence type="ECO:0000303" key="6">
    <source>
    </source>
</evidence>
<evidence type="ECO:0000305" key="7"/>
<evidence type="ECO:0007744" key="8">
    <source>
    </source>
</evidence>
<evidence type="ECO:0007744" key="9">
    <source>
    </source>
</evidence>
<evidence type="ECO:0007744" key="10">
    <source>
    </source>
</evidence>
<evidence type="ECO:0007744" key="11">
    <source>
    </source>
</evidence>
<protein>
    <recommendedName>
        <fullName evidence="7">Inactive tyrosine-protein kinase PEAK1</fullName>
    </recommendedName>
    <alternativeName>
        <fullName evidence="6">Pseudopodium-enriched atypical kinase 1</fullName>
    </alternativeName>
    <alternativeName>
        <fullName>Sugen kinase 269</fullName>
    </alternativeName>
    <alternativeName>
        <fullName>Tyrosine-protein kinase SgK269</fullName>
    </alternativeName>
</protein>
<gene>
    <name type="primary">Peak1</name>
    <name type="synonym">Kiaa2002</name>
    <name type="synonym">Sgk269</name>
</gene>
<keyword id="KW-0965">Cell junction</keyword>
<keyword id="KW-0963">Cytoplasm</keyword>
<keyword id="KW-0206">Cytoskeleton</keyword>
<keyword id="KW-0597">Phosphoprotein</keyword>
<keyword id="KW-1185">Reference proteome</keyword>